<reference key="1">
    <citation type="journal article" date="2002" name="Proc. Natl. Acad. Sci. U.S.A.">
        <title>The Brucella suis genome reveals fundamental similarities between animal and plant pathogens and symbionts.</title>
        <authorList>
            <person name="Paulsen I.T."/>
            <person name="Seshadri R."/>
            <person name="Nelson K.E."/>
            <person name="Eisen J.A."/>
            <person name="Heidelberg J.F."/>
            <person name="Read T.D."/>
            <person name="Dodson R.J."/>
            <person name="Umayam L.A."/>
            <person name="Brinkac L.M."/>
            <person name="Beanan M.J."/>
            <person name="Daugherty S.C."/>
            <person name="DeBoy R.T."/>
            <person name="Durkin A.S."/>
            <person name="Kolonay J.F."/>
            <person name="Madupu R."/>
            <person name="Nelson W.C."/>
            <person name="Ayodeji B."/>
            <person name="Kraul M."/>
            <person name="Shetty J."/>
            <person name="Malek J.A."/>
            <person name="Van Aken S.E."/>
            <person name="Riedmuller S."/>
            <person name="Tettelin H."/>
            <person name="Gill S.R."/>
            <person name="White O."/>
            <person name="Salzberg S.L."/>
            <person name="Hoover D.L."/>
            <person name="Lindler L.E."/>
            <person name="Halling S.M."/>
            <person name="Boyle S.M."/>
            <person name="Fraser C.M."/>
        </authorList>
    </citation>
    <scope>NUCLEOTIDE SEQUENCE [LARGE SCALE GENOMIC DNA]</scope>
    <source>
        <strain>1330</strain>
    </source>
</reference>
<reference key="2">
    <citation type="journal article" date="2011" name="J. Bacteriol.">
        <title>Revised genome sequence of Brucella suis 1330.</title>
        <authorList>
            <person name="Tae H."/>
            <person name="Shallom S."/>
            <person name="Settlage R."/>
            <person name="Preston D."/>
            <person name="Adams L.G."/>
            <person name="Garner H.R."/>
        </authorList>
    </citation>
    <scope>NUCLEOTIDE SEQUENCE [LARGE SCALE GENOMIC DNA]</scope>
    <source>
        <strain>1330</strain>
    </source>
</reference>
<comment type="function">
    <text evidence="1">Converts heme B (protoheme IX) to heme O by substitution of the vinyl group on carbon 2 of heme B porphyrin ring with a hydroxyethyl farnesyl side group.</text>
</comment>
<comment type="catalytic activity">
    <reaction evidence="1">
        <text>heme b + (2E,6E)-farnesyl diphosphate + H2O = Fe(II)-heme o + diphosphate</text>
        <dbReference type="Rhea" id="RHEA:28070"/>
        <dbReference type="ChEBI" id="CHEBI:15377"/>
        <dbReference type="ChEBI" id="CHEBI:33019"/>
        <dbReference type="ChEBI" id="CHEBI:60344"/>
        <dbReference type="ChEBI" id="CHEBI:60530"/>
        <dbReference type="ChEBI" id="CHEBI:175763"/>
        <dbReference type="EC" id="2.5.1.141"/>
    </reaction>
</comment>
<comment type="pathway">
    <text evidence="1">Porphyrin-containing compound metabolism; heme O biosynthesis; heme O from protoheme: step 1/1.</text>
</comment>
<comment type="subcellular location">
    <subcellularLocation>
        <location evidence="1">Cell inner membrane</location>
        <topology evidence="1">Multi-pass membrane protein</topology>
    </subcellularLocation>
</comment>
<comment type="miscellaneous">
    <text evidence="1">Carbon 2 of the heme B porphyrin ring is defined according to the Fischer nomenclature.</text>
</comment>
<comment type="similarity">
    <text evidence="1">Belongs to the UbiA prenyltransferase family. Protoheme IX farnesyltransferase subfamily.</text>
</comment>
<comment type="sequence caution" evidence="2">
    <conflict type="erroneous initiation">
        <sequence resource="EMBL-CDS" id="AAN29412"/>
    </conflict>
</comment>
<comment type="sequence caution" evidence="2">
    <conflict type="erroneous initiation">
        <sequence resource="EMBL-CDS" id="AEM17825"/>
    </conflict>
    <text>Extended N-terminus.</text>
</comment>
<proteinExistence type="inferred from homology"/>
<keyword id="KW-0997">Cell inner membrane</keyword>
<keyword id="KW-1003">Cell membrane</keyword>
<keyword id="KW-0350">Heme biosynthesis</keyword>
<keyword id="KW-0472">Membrane</keyword>
<keyword id="KW-0808">Transferase</keyword>
<keyword id="KW-0812">Transmembrane</keyword>
<keyword id="KW-1133">Transmembrane helix</keyword>
<organism>
    <name type="scientific">Brucella suis biovar 1 (strain 1330)</name>
    <dbReference type="NCBI Taxonomy" id="204722"/>
    <lineage>
        <taxon>Bacteria</taxon>
        <taxon>Pseudomonadati</taxon>
        <taxon>Pseudomonadota</taxon>
        <taxon>Alphaproteobacteria</taxon>
        <taxon>Hyphomicrobiales</taxon>
        <taxon>Brucellaceae</taxon>
        <taxon>Brucella/Ochrobactrum group</taxon>
        <taxon>Brucella</taxon>
    </lineage>
</organism>
<dbReference type="EC" id="2.5.1.141" evidence="1"/>
<dbReference type="EMBL" id="AE014291">
    <property type="protein sequence ID" value="AAN29412.1"/>
    <property type="status" value="ALT_INIT"/>
    <property type="molecule type" value="Genomic_DNA"/>
</dbReference>
<dbReference type="EMBL" id="CP002997">
    <property type="protein sequence ID" value="AEM17825.1"/>
    <property type="status" value="ALT_INIT"/>
    <property type="molecule type" value="Genomic_DNA"/>
</dbReference>
<dbReference type="SMR" id="P67054"/>
<dbReference type="KEGG" id="bms:BR0469"/>
<dbReference type="KEGG" id="bsi:BS1330_I0470"/>
<dbReference type="HOGENOM" id="CLU_029631_0_2_5"/>
<dbReference type="UniPathway" id="UPA00834">
    <property type="reaction ID" value="UER00712"/>
</dbReference>
<dbReference type="Proteomes" id="UP000007104">
    <property type="component" value="Chromosome I"/>
</dbReference>
<dbReference type="GO" id="GO:0005886">
    <property type="term" value="C:plasma membrane"/>
    <property type="evidence" value="ECO:0007669"/>
    <property type="project" value="UniProtKB-SubCell"/>
</dbReference>
<dbReference type="GO" id="GO:0008495">
    <property type="term" value="F:protoheme IX farnesyltransferase activity"/>
    <property type="evidence" value="ECO:0007669"/>
    <property type="project" value="UniProtKB-UniRule"/>
</dbReference>
<dbReference type="GO" id="GO:0048034">
    <property type="term" value="P:heme O biosynthetic process"/>
    <property type="evidence" value="ECO:0007669"/>
    <property type="project" value="UniProtKB-UniRule"/>
</dbReference>
<dbReference type="CDD" id="cd13957">
    <property type="entry name" value="PT_UbiA_Cox10"/>
    <property type="match status" value="1"/>
</dbReference>
<dbReference type="FunFam" id="1.10.357.140:FF:000001">
    <property type="entry name" value="Protoheme IX farnesyltransferase"/>
    <property type="match status" value="1"/>
</dbReference>
<dbReference type="Gene3D" id="1.10.357.140">
    <property type="entry name" value="UbiA prenyltransferase"/>
    <property type="match status" value="1"/>
</dbReference>
<dbReference type="HAMAP" id="MF_00154">
    <property type="entry name" value="CyoE_CtaB"/>
    <property type="match status" value="1"/>
</dbReference>
<dbReference type="InterPro" id="IPR006369">
    <property type="entry name" value="Protohaem_IX_farnesylTrfase"/>
</dbReference>
<dbReference type="InterPro" id="IPR000537">
    <property type="entry name" value="UbiA_prenyltransferase"/>
</dbReference>
<dbReference type="InterPro" id="IPR030470">
    <property type="entry name" value="UbiA_prenylTrfase_CS"/>
</dbReference>
<dbReference type="InterPro" id="IPR044878">
    <property type="entry name" value="UbiA_sf"/>
</dbReference>
<dbReference type="NCBIfam" id="TIGR01473">
    <property type="entry name" value="cyoE_ctaB"/>
    <property type="match status" value="1"/>
</dbReference>
<dbReference type="NCBIfam" id="NF003349">
    <property type="entry name" value="PRK04375.1-2"/>
    <property type="match status" value="1"/>
</dbReference>
<dbReference type="PANTHER" id="PTHR43448:SF7">
    <property type="entry name" value="4-HYDROXYBENZOATE SOLANESYLTRANSFERASE"/>
    <property type="match status" value="1"/>
</dbReference>
<dbReference type="PANTHER" id="PTHR43448">
    <property type="entry name" value="PROTOHEME IX FARNESYLTRANSFERASE, MITOCHONDRIAL"/>
    <property type="match status" value="1"/>
</dbReference>
<dbReference type="Pfam" id="PF01040">
    <property type="entry name" value="UbiA"/>
    <property type="match status" value="1"/>
</dbReference>
<dbReference type="PROSITE" id="PS00943">
    <property type="entry name" value="UBIA"/>
    <property type="match status" value="1"/>
</dbReference>
<protein>
    <recommendedName>
        <fullName evidence="1">Protoheme IX farnesyltransferase</fullName>
        <ecNumber evidence="1">2.5.1.141</ecNumber>
    </recommendedName>
    <alternativeName>
        <fullName evidence="1">Heme B farnesyltransferase</fullName>
    </alternativeName>
    <alternativeName>
        <fullName evidence="1">Heme O synthase</fullName>
    </alternativeName>
</protein>
<evidence type="ECO:0000255" key="1">
    <source>
        <dbReference type="HAMAP-Rule" id="MF_00154"/>
    </source>
</evidence>
<evidence type="ECO:0000305" key="2"/>
<sequence>MEKNTASEDAFALSEATARDYLVLLKPRVMSLVVFTGLVGLVLAPGHMNPVLAVISILCIAVGAGASGALNMWYDADIDAVMKRTRKRPIPAGIIAPNQVLAFGLTLSAFSVMTLGLMVNWLAAALLAFTIFFYAVIYTMWLKRSTPQNIVIGGAAGAFPPMIGWAAATGEITWDSLVLFMIIFLWTPPHFWALSLFTTNDYEAARIPMMPNVKGELSTRRQALFYAVLMAPVGVLPWVMGFAGMFYGVVSTLLGLAFVYYAWRLWAADSQPQMLAAARKLFRFSLLYLAGIFAVLLFEALTFKLLAAFGVF</sequence>
<gene>
    <name evidence="1" type="primary">ctaB</name>
    <name type="ordered locus">BR0469</name>
    <name type="ordered locus">BS1330_I0470</name>
</gene>
<name>COXX_BRUSU</name>
<accession>P67054</accession>
<accession>G0K718</accession>
<accession>Q8YFQ6</accession>
<feature type="chain" id="PRO_0000162907" description="Protoheme IX farnesyltransferase">
    <location>
        <begin position="1"/>
        <end position="312"/>
    </location>
</feature>
<feature type="transmembrane region" description="Helical" evidence="1">
    <location>
        <begin position="29"/>
        <end position="49"/>
    </location>
</feature>
<feature type="transmembrane region" description="Helical" evidence="1">
    <location>
        <begin position="50"/>
        <end position="70"/>
    </location>
</feature>
<feature type="transmembrane region" description="Helical" evidence="1">
    <location>
        <begin position="90"/>
        <end position="110"/>
    </location>
</feature>
<feature type="transmembrane region" description="Helical" evidence="1">
    <location>
        <begin position="117"/>
        <end position="137"/>
    </location>
</feature>
<feature type="transmembrane region" description="Helical" evidence="1">
    <location>
        <begin position="150"/>
        <end position="170"/>
    </location>
</feature>
<feature type="transmembrane region" description="Helical" evidence="1">
    <location>
        <begin position="177"/>
        <end position="197"/>
    </location>
</feature>
<feature type="transmembrane region" description="Helical" evidence="1">
    <location>
        <begin position="223"/>
        <end position="243"/>
    </location>
</feature>
<feature type="transmembrane region" description="Helical" evidence="1">
    <location>
        <begin position="246"/>
        <end position="266"/>
    </location>
</feature>
<feature type="transmembrane region" description="Helical" evidence="1">
    <location>
        <begin position="292"/>
        <end position="312"/>
    </location>
</feature>